<keyword id="KW-0028">Amino-acid biosynthesis</keyword>
<keyword id="KW-0963">Cytoplasm</keyword>
<keyword id="KW-0521">NADP</keyword>
<keyword id="KW-0560">Oxidoreductase</keyword>
<keyword id="KW-0641">Proline biosynthesis</keyword>
<keyword id="KW-1185">Reference proteome</keyword>
<evidence type="ECO:0000255" key="1">
    <source>
        <dbReference type="HAMAP-Rule" id="MF_00412"/>
    </source>
</evidence>
<dbReference type="EC" id="1.2.1.41" evidence="1"/>
<dbReference type="EMBL" id="BX571863">
    <property type="protein sequence ID" value="CAE13538.1"/>
    <property type="molecule type" value="Genomic_DNA"/>
</dbReference>
<dbReference type="RefSeq" id="WP_011145569.1">
    <property type="nucleotide sequence ID" value="NC_005126.1"/>
</dbReference>
<dbReference type="SMR" id="Q7N7B1"/>
<dbReference type="STRING" id="243265.plu1244"/>
<dbReference type="GeneID" id="48847514"/>
<dbReference type="KEGG" id="plu:plu1244"/>
<dbReference type="eggNOG" id="COG0014">
    <property type="taxonomic scope" value="Bacteria"/>
</dbReference>
<dbReference type="HOGENOM" id="CLU_030231_0_0_6"/>
<dbReference type="OrthoDB" id="9809970at2"/>
<dbReference type="UniPathway" id="UPA00098">
    <property type="reaction ID" value="UER00360"/>
</dbReference>
<dbReference type="Proteomes" id="UP000002514">
    <property type="component" value="Chromosome"/>
</dbReference>
<dbReference type="GO" id="GO:0005737">
    <property type="term" value="C:cytoplasm"/>
    <property type="evidence" value="ECO:0007669"/>
    <property type="project" value="UniProtKB-SubCell"/>
</dbReference>
<dbReference type="GO" id="GO:0004350">
    <property type="term" value="F:glutamate-5-semialdehyde dehydrogenase activity"/>
    <property type="evidence" value="ECO:0007669"/>
    <property type="project" value="UniProtKB-UniRule"/>
</dbReference>
<dbReference type="GO" id="GO:0050661">
    <property type="term" value="F:NADP binding"/>
    <property type="evidence" value="ECO:0007669"/>
    <property type="project" value="InterPro"/>
</dbReference>
<dbReference type="GO" id="GO:0055129">
    <property type="term" value="P:L-proline biosynthetic process"/>
    <property type="evidence" value="ECO:0007669"/>
    <property type="project" value="UniProtKB-UniRule"/>
</dbReference>
<dbReference type="CDD" id="cd07079">
    <property type="entry name" value="ALDH_F18-19_ProA-GPR"/>
    <property type="match status" value="1"/>
</dbReference>
<dbReference type="FunFam" id="3.40.309.10:FF:000006">
    <property type="entry name" value="Gamma-glutamyl phosphate reductase"/>
    <property type="match status" value="1"/>
</dbReference>
<dbReference type="Gene3D" id="3.40.605.10">
    <property type="entry name" value="Aldehyde Dehydrogenase, Chain A, domain 1"/>
    <property type="match status" value="1"/>
</dbReference>
<dbReference type="Gene3D" id="3.40.309.10">
    <property type="entry name" value="Aldehyde Dehydrogenase, Chain A, domain 2"/>
    <property type="match status" value="1"/>
</dbReference>
<dbReference type="HAMAP" id="MF_00412">
    <property type="entry name" value="ProA"/>
    <property type="match status" value="1"/>
</dbReference>
<dbReference type="InterPro" id="IPR016161">
    <property type="entry name" value="Ald_DH/histidinol_DH"/>
</dbReference>
<dbReference type="InterPro" id="IPR016163">
    <property type="entry name" value="Ald_DH_C"/>
</dbReference>
<dbReference type="InterPro" id="IPR016162">
    <property type="entry name" value="Ald_DH_N"/>
</dbReference>
<dbReference type="InterPro" id="IPR015590">
    <property type="entry name" value="Aldehyde_DH_dom"/>
</dbReference>
<dbReference type="InterPro" id="IPR020593">
    <property type="entry name" value="G-glutamylP_reductase_CS"/>
</dbReference>
<dbReference type="InterPro" id="IPR012134">
    <property type="entry name" value="Glu-5-SA_DH"/>
</dbReference>
<dbReference type="InterPro" id="IPR000965">
    <property type="entry name" value="GPR_dom"/>
</dbReference>
<dbReference type="NCBIfam" id="NF001221">
    <property type="entry name" value="PRK00197.1"/>
    <property type="match status" value="1"/>
</dbReference>
<dbReference type="NCBIfam" id="TIGR00407">
    <property type="entry name" value="proA"/>
    <property type="match status" value="1"/>
</dbReference>
<dbReference type="PANTHER" id="PTHR11063:SF8">
    <property type="entry name" value="DELTA-1-PYRROLINE-5-CARBOXYLATE SYNTHASE"/>
    <property type="match status" value="1"/>
</dbReference>
<dbReference type="PANTHER" id="PTHR11063">
    <property type="entry name" value="GLUTAMATE SEMIALDEHYDE DEHYDROGENASE"/>
    <property type="match status" value="1"/>
</dbReference>
<dbReference type="Pfam" id="PF00171">
    <property type="entry name" value="Aldedh"/>
    <property type="match status" value="1"/>
</dbReference>
<dbReference type="PIRSF" id="PIRSF000151">
    <property type="entry name" value="GPR"/>
    <property type="match status" value="1"/>
</dbReference>
<dbReference type="SUPFAM" id="SSF53720">
    <property type="entry name" value="ALDH-like"/>
    <property type="match status" value="1"/>
</dbReference>
<dbReference type="PROSITE" id="PS01223">
    <property type="entry name" value="PROA"/>
    <property type="match status" value="1"/>
</dbReference>
<name>PROA_PHOLL</name>
<feature type="chain" id="PRO_0000189761" description="Gamma-glutamyl phosphate reductase">
    <location>
        <begin position="1"/>
        <end position="417"/>
    </location>
</feature>
<gene>
    <name evidence="1" type="primary">proA</name>
    <name type="ordered locus">plu1244</name>
</gene>
<proteinExistence type="inferred from homology"/>
<protein>
    <recommendedName>
        <fullName evidence="1">Gamma-glutamyl phosphate reductase</fullName>
        <shortName evidence="1">GPR</shortName>
        <ecNumber evidence="1">1.2.1.41</ecNumber>
    </recommendedName>
    <alternativeName>
        <fullName evidence="1">Glutamate-5-semialdehyde dehydrogenase</fullName>
    </alternativeName>
    <alternativeName>
        <fullName evidence="1">Glutamyl-gamma-semialdehyde dehydrogenase</fullName>
        <shortName evidence="1">GSA dehydrogenase</shortName>
    </alternativeName>
</protein>
<organism>
    <name type="scientific">Photorhabdus laumondii subsp. laumondii (strain DSM 15139 / CIP 105565 / TT01)</name>
    <name type="common">Photorhabdus luminescens subsp. laumondii</name>
    <dbReference type="NCBI Taxonomy" id="243265"/>
    <lineage>
        <taxon>Bacteria</taxon>
        <taxon>Pseudomonadati</taxon>
        <taxon>Pseudomonadota</taxon>
        <taxon>Gammaproteobacteria</taxon>
        <taxon>Enterobacterales</taxon>
        <taxon>Morganellaceae</taxon>
        <taxon>Photorhabdus</taxon>
    </lineage>
</organism>
<sequence length="417" mass="45506">MLEQMGKAAREAAWQLAQLSTKQKNQALIRIADLLEQESAIILEANQLDMIQAREQGMSEALLDRLLLTPERLTAIAHDVRQVCGLSDPVGEVIDGSLLDSGLRLERRRVPLGVVGVIYEARPNVTIDVASLCLKTGNAVILRGGKETHNTNQATVKVIQQALEQSGLPAAAVQAIDKPDRELVIQLLKLDRYVDMLIPRGGAGLHKLCREQSTIPVITGGIGVCHTFVDESADFDKALTVITNAKVQRPSACNALETLLVHQKIAADFLPALSKYMEEQGVTLHASKSAMVFLKDGAAKVVDVTEADYRDEWLSLDMNVEIVSDMEQAIDHIRTYGTSHSDAILTQSLHNADYFVRQVDSAAVYVNASTRFTDGGQFGLGAEVAVSTQKLHSRGPMGLDALTTYKWIGYGEDLVRK</sequence>
<comment type="function">
    <text evidence="1">Catalyzes the NADPH-dependent reduction of L-glutamate 5-phosphate into L-glutamate 5-semialdehyde and phosphate. The product spontaneously undergoes cyclization to form 1-pyrroline-5-carboxylate.</text>
</comment>
<comment type="catalytic activity">
    <reaction evidence="1">
        <text>L-glutamate 5-semialdehyde + phosphate + NADP(+) = L-glutamyl 5-phosphate + NADPH + H(+)</text>
        <dbReference type="Rhea" id="RHEA:19541"/>
        <dbReference type="ChEBI" id="CHEBI:15378"/>
        <dbReference type="ChEBI" id="CHEBI:43474"/>
        <dbReference type="ChEBI" id="CHEBI:57783"/>
        <dbReference type="ChEBI" id="CHEBI:58066"/>
        <dbReference type="ChEBI" id="CHEBI:58274"/>
        <dbReference type="ChEBI" id="CHEBI:58349"/>
        <dbReference type="EC" id="1.2.1.41"/>
    </reaction>
</comment>
<comment type="pathway">
    <text evidence="1">Amino-acid biosynthesis; L-proline biosynthesis; L-glutamate 5-semialdehyde from L-glutamate: step 2/2.</text>
</comment>
<comment type="subcellular location">
    <subcellularLocation>
        <location evidence="1">Cytoplasm</location>
    </subcellularLocation>
</comment>
<comment type="similarity">
    <text evidence="1">Belongs to the gamma-glutamyl phosphate reductase family.</text>
</comment>
<accession>Q7N7B1</accession>
<reference key="1">
    <citation type="journal article" date="2003" name="Nat. Biotechnol.">
        <title>The genome sequence of the entomopathogenic bacterium Photorhabdus luminescens.</title>
        <authorList>
            <person name="Duchaud E."/>
            <person name="Rusniok C."/>
            <person name="Frangeul L."/>
            <person name="Buchrieser C."/>
            <person name="Givaudan A."/>
            <person name="Taourit S."/>
            <person name="Bocs S."/>
            <person name="Boursaux-Eude C."/>
            <person name="Chandler M."/>
            <person name="Charles J.-F."/>
            <person name="Dassa E."/>
            <person name="Derose R."/>
            <person name="Derzelle S."/>
            <person name="Freyssinet G."/>
            <person name="Gaudriault S."/>
            <person name="Medigue C."/>
            <person name="Lanois A."/>
            <person name="Powell K."/>
            <person name="Siguier P."/>
            <person name="Vincent R."/>
            <person name="Wingate V."/>
            <person name="Zouine M."/>
            <person name="Glaser P."/>
            <person name="Boemare N."/>
            <person name="Danchin A."/>
            <person name="Kunst F."/>
        </authorList>
    </citation>
    <scope>NUCLEOTIDE SEQUENCE [LARGE SCALE GENOMIC DNA]</scope>
    <source>
        <strain>DSM 15139 / CIP 105565 / TT01</strain>
    </source>
</reference>